<organism>
    <name type="scientific">Leishmania major</name>
    <dbReference type="NCBI Taxonomy" id="5664"/>
    <lineage>
        <taxon>Eukaryota</taxon>
        <taxon>Discoba</taxon>
        <taxon>Euglenozoa</taxon>
        <taxon>Kinetoplastea</taxon>
        <taxon>Metakinetoplastina</taxon>
        <taxon>Trypanosomatida</taxon>
        <taxon>Trypanosomatidae</taxon>
        <taxon>Leishmaniinae</taxon>
        <taxon>Leishmania</taxon>
    </lineage>
</organism>
<comment type="function">
    <text evidence="1 2 3">Cytosolic fumarate hydratase that catalyzes the reversible hydration of fumarate to (S)-malate.</text>
</comment>
<comment type="catalytic activity">
    <reaction evidence="1 2 3">
        <text>(S)-malate = fumarate + H2O</text>
        <dbReference type="Rhea" id="RHEA:12460"/>
        <dbReference type="ChEBI" id="CHEBI:15377"/>
        <dbReference type="ChEBI" id="CHEBI:15589"/>
        <dbReference type="ChEBI" id="CHEBI:29806"/>
        <dbReference type="EC" id="4.2.1.2"/>
    </reaction>
    <physiologicalReaction direction="left-to-right" evidence="1">
        <dbReference type="Rhea" id="RHEA:12461"/>
    </physiologicalReaction>
    <physiologicalReaction direction="right-to-left" evidence="1">
        <dbReference type="Rhea" id="RHEA:12462"/>
    </physiologicalReaction>
</comment>
<comment type="cofactor">
    <cofactor evidence="2">
        <name>[4Fe-4S] cluster</name>
        <dbReference type="ChEBI" id="CHEBI:49883"/>
    </cofactor>
    <text evidence="2">Binds 1 [4Fe-4S] cluster per subunit.</text>
</comment>
<comment type="activity regulation">
    <text evidence="2 3">Specifically and competitively inhibited by 2-thiomalate, which coordinates with the catalytic [4Fe-4S] cluster (PubMed:30645090). Weakly inhibited by malonate (PubMed:27528683).</text>
</comment>
<comment type="biophysicochemical properties">
    <kinetics>
        <KM evidence="1">5.7 mM for fumarate (in anaerobic conditions)</KM>
        <KM evidence="1">1.9 mM for fumarate (in aerobic conditions)</KM>
        <KM evidence="1">12.6 mM for (S)-malate (in anaerobic conditions)</KM>
        <KM evidence="1">5.7 mM for (S)-malate (in aerobic conditions)</KM>
        <Vmax>186.2 umol/min/mg enzyme with fumarate as substrate (in anaerobic conditions)</Vmax>
        <Vmax>44.3 umol/min/mg enzyme with fumarate as substrate (in aerobic conditions)</Vmax>
        <Vmax>138.1 umol/min/mg enzyme with (S)-malate as substrate (in anaerobic conditions)</Vmax>
        <Vmax>22.7 umol/min/mg enzyme with (S)-malate as substrate (in aerobic conditions)</Vmax>
        <text evidence="1">kcat is 204.2 sec(-1) for fumarate (in anaerobic conditions) (PubMed:22569531). kcat is 48.6 sec(-1) for fumarate (in aerobic conditions) (PubMed:22569531). kcat is 151.4 sec(-1) for (S)-malate (in anaerobic conditions) (PubMed:22569531). kcat is 24.9 sec(-1) for (S)-malate (in aerobic conditions) (PubMed:22569531).</text>
    </kinetics>
    <phDependence>
        <text evidence="1">Optimum pH is 9.</text>
    </phDependence>
</comment>
<comment type="subunit">
    <text evidence="2 3">Homodimer.</text>
</comment>
<comment type="subcellular location">
    <subcellularLocation>
        <location evidence="1">Cytoplasm</location>
        <location evidence="1">Cytosol</location>
    </subcellularLocation>
</comment>
<comment type="similarity">
    <text evidence="5">Belongs to the class-I fumarase family.</text>
</comment>
<evidence type="ECO:0000269" key="1">
    <source>
    </source>
</evidence>
<evidence type="ECO:0000269" key="2">
    <source>
    </source>
</evidence>
<evidence type="ECO:0000269" key="3">
    <source>
    </source>
</evidence>
<evidence type="ECO:0000303" key="4">
    <source>
    </source>
</evidence>
<evidence type="ECO:0000305" key="5"/>
<evidence type="ECO:0000312" key="6">
    <source>
        <dbReference type="EMBL" id="CBZ12536.1"/>
    </source>
</evidence>
<evidence type="ECO:0007744" key="7">
    <source>
        <dbReference type="PDB" id="5L2R"/>
    </source>
</evidence>
<evidence type="ECO:0007829" key="8">
    <source>
        <dbReference type="PDB" id="6UQ8"/>
    </source>
</evidence>
<evidence type="ECO:0007829" key="9">
    <source>
        <dbReference type="PDB" id="6UQN"/>
    </source>
</evidence>
<name>FUM2_LEIMA</name>
<sequence>MSLCDQCEIGCRRVGIKDIEDASAVNADFHFSAIFQPTDPHHHQTEFAKVEGSEKYVEEVEVFGRQALKVNPEALTILAHRAFSDVHHFFRKDHLEGWRRAIEDPEASDNDRYVATTLLKNACIAAGRVLPSCQDTGTAIVLGKRGELCWTGGEDEKYLSKGIWNAYRYHNLRYSQTAALDMFKECNTGDNLPAQLDLLAVPGSDYEFLFIAKGGGSANKAYLYQETKALLNPKSLRAFIEEKLKTLGTAACPPYHIALVIGGTSAEMTMKTVKLASCRYYDSLPTTGDKYGRAFRDPEWEKIVMEVAQKSGIGAQFGGKYFAHQARVIRLPRHGASCPVGLAVSCSADRQILAHINKSGIYIEQLEQNPAQYLPDIPEVHLSTTSVKVDLKRPIDKVRQQLSQYPVGTRVMLNGTLIVARDIAHAKIKEMMDNGEPLPEYMKTSPIYYAGPAKTPEGYASGSFGPTTAGRMDSYVDLFQSHGGSYITLAKGNRSKQVTDACKKHGGFYLGSIGGPAAILAKDSIKQVTCLAFPELGMEAVWKIEVEDFPAFIVVDDKGNDMYSKTLA</sequence>
<reference key="1">
    <citation type="journal article" date="2005" name="Science">
        <title>The genome of the kinetoplastid parasite, Leishmania major.</title>
        <authorList>
            <person name="Ivens A.C."/>
            <person name="Peacock C.S."/>
            <person name="Worthey E.A."/>
            <person name="Murphy L."/>
            <person name="Aggarwal G."/>
            <person name="Berriman M."/>
            <person name="Sisk E."/>
            <person name="Rajandream M.A."/>
            <person name="Adlem E."/>
            <person name="Aert R."/>
            <person name="Anupama A."/>
            <person name="Apostolou Z."/>
            <person name="Attipoe P."/>
            <person name="Bason N."/>
            <person name="Bauser C."/>
            <person name="Beck A."/>
            <person name="Beverley S.M."/>
            <person name="Bianchettin G."/>
            <person name="Borzym K."/>
            <person name="Bothe G."/>
            <person name="Bruschi C.V."/>
            <person name="Collins M."/>
            <person name="Cadag E."/>
            <person name="Ciarloni L."/>
            <person name="Clayton C."/>
            <person name="Coulson R.M.R."/>
            <person name="Cronin A."/>
            <person name="Cruz A.K."/>
            <person name="Davies R.M."/>
            <person name="De Gaudenzi J."/>
            <person name="Dobson D.E."/>
            <person name="Duesterhoeft A."/>
            <person name="Fazelina G."/>
            <person name="Fosker N."/>
            <person name="Frasch A.C."/>
            <person name="Fraser A."/>
            <person name="Fuchs M."/>
            <person name="Gabel C."/>
            <person name="Goble A."/>
            <person name="Goffeau A."/>
            <person name="Harris D."/>
            <person name="Hertz-Fowler C."/>
            <person name="Hilbert H."/>
            <person name="Horn D."/>
            <person name="Huang Y."/>
            <person name="Klages S."/>
            <person name="Knights A."/>
            <person name="Kube M."/>
            <person name="Larke N."/>
            <person name="Litvin L."/>
            <person name="Lord A."/>
            <person name="Louie T."/>
            <person name="Marra M."/>
            <person name="Masuy D."/>
            <person name="Matthews K."/>
            <person name="Michaeli S."/>
            <person name="Mottram J.C."/>
            <person name="Mueller-Auer S."/>
            <person name="Munden H."/>
            <person name="Nelson S."/>
            <person name="Norbertczak H."/>
            <person name="Oliver K."/>
            <person name="O'neil S."/>
            <person name="Pentony M."/>
            <person name="Pohl T.M."/>
            <person name="Price C."/>
            <person name="Purnelle B."/>
            <person name="Quail M.A."/>
            <person name="Rabbinowitsch E."/>
            <person name="Reinhardt R."/>
            <person name="Rieger M."/>
            <person name="Rinta J."/>
            <person name="Robben J."/>
            <person name="Robertson L."/>
            <person name="Ruiz J.C."/>
            <person name="Rutter S."/>
            <person name="Saunders D."/>
            <person name="Schaefer M."/>
            <person name="Schein J."/>
            <person name="Schwartz D.C."/>
            <person name="Seeger K."/>
            <person name="Seyler A."/>
            <person name="Sharp S."/>
            <person name="Shin H."/>
            <person name="Sivam D."/>
            <person name="Squares R."/>
            <person name="Squares S."/>
            <person name="Tosato V."/>
            <person name="Vogt C."/>
            <person name="Volckaert G."/>
            <person name="Wambutt R."/>
            <person name="Warren T."/>
            <person name="Wedler H."/>
            <person name="Woodward J."/>
            <person name="Zhou S."/>
            <person name="Zimmermann W."/>
            <person name="Smith D.F."/>
            <person name="Blackwell J.M."/>
            <person name="Stuart K.D."/>
            <person name="Barrell B.G."/>
            <person name="Myler P.J."/>
        </authorList>
    </citation>
    <scope>NUCLEOTIDE SEQUENCE [LARGE SCALE GENOMIC DNA]</scope>
    <source>
        <strain>MHOM/IL/81/Friedlin</strain>
    </source>
</reference>
<reference key="2">
    <citation type="journal article" date="2012" name="Int. J. Biol. Macromol.">
        <title>Fumarate hydratase isoforms of Leishmania major: subcellular localization, structural and kinetic properties.</title>
        <authorList>
            <person name="Feliciano P.R."/>
            <person name="Gupta S."/>
            <person name="Dyszy F."/>
            <person name="Dias-Baruffi M."/>
            <person name="Costa-Filho A.J."/>
            <person name="Michels P.A."/>
            <person name="Nonato M.C."/>
        </authorList>
    </citation>
    <scope>FUNCTION</scope>
    <scope>CATALYTIC ACTIVITY</scope>
    <scope>BIOPHYSICOCHEMICAL PROPERTIES</scope>
    <scope>SUBCELLULAR LOCATION</scope>
</reference>
<reference evidence="7" key="3">
    <citation type="journal article" date="2016" name="Proc. Natl. Acad. Sci. U.S.A.">
        <title>Crystal structure of an Fe-S cluster-containing fumarate hydratase enzyme from Leishmania major reveals a unique protein fold.</title>
        <authorList>
            <person name="Feliciano P.R."/>
            <person name="Drennan C.L."/>
            <person name="Nonato M.C."/>
        </authorList>
    </citation>
    <scope>X-RAY CRYSTALLOGRAPHY (2.05 ANGSTROMS) IN COMPLEX WITH IRON-SULFUR; MALATE AND MALONATE</scope>
    <scope>FUNCTION</scope>
    <scope>CATALYTIC ACTIVITY</scope>
    <scope>COFACTOR</scope>
    <scope>SUBUNIT</scope>
    <scope>ACTIVITY REGULATION</scope>
</reference>
<reference key="4">
    <citation type="journal article" date="2019" name="ACS Chem. Biol.">
        <title>Crystal structures of fumarate hydratases from Leishmania major in a complex with inhibitor 2-thiomalate.</title>
        <authorList>
            <person name="Feliciano P.R."/>
            <person name="Drennan C.L."/>
            <person name="Nonato M.C."/>
        </authorList>
    </citation>
    <scope>X-RAY CRYSTALLOGRAPHY (1.59 ANGSTROMS) OF 28-568 IN COMPLEX WITH 2-THIOMALATE INHIBITOR</scope>
    <scope>FUNCTION</scope>
    <scope>CATALYTIC ACTIVITY</scope>
    <scope>SUBUNIT</scope>
    <scope>ACTIVITY REGULATION</scope>
</reference>
<keyword id="KW-0002">3D-structure</keyword>
<keyword id="KW-0004">4Fe-4S</keyword>
<keyword id="KW-0963">Cytoplasm</keyword>
<keyword id="KW-0408">Iron</keyword>
<keyword id="KW-0411">Iron-sulfur</keyword>
<keyword id="KW-0456">Lyase</keyword>
<keyword id="KW-0479">Metal-binding</keyword>
<keyword id="KW-1185">Reference proteome</keyword>
<accession>E9AE57</accession>
<gene>
    <name evidence="4" type="primary">FH2</name>
    <name evidence="6" type="ORF">LMJF_29_1960</name>
</gene>
<proteinExistence type="evidence at protein level"/>
<feature type="chain" id="PRO_0000447006" description="Fumarate hydratase 2">
    <location>
        <begin position="1"/>
        <end position="568"/>
    </location>
</feature>
<feature type="binding site" evidence="2 7">
    <location>
        <position position="133"/>
    </location>
    <ligand>
        <name>[4Fe-4S] cluster</name>
        <dbReference type="ChEBI" id="CHEBI:49883"/>
    </ligand>
</feature>
<feature type="binding site" evidence="2 7">
    <location>
        <begin position="134"/>
        <end position="135"/>
    </location>
    <ligand>
        <name>(S)-malate</name>
        <dbReference type="ChEBI" id="CHEBI:15589"/>
        <label>1</label>
    </ligand>
</feature>
<feature type="binding site" evidence="2 7">
    <location>
        <position position="173"/>
    </location>
    <ligand>
        <name>(S)-malate</name>
        <dbReference type="ChEBI" id="CHEBI:15589"/>
        <label>1</label>
    </ligand>
</feature>
<feature type="binding site" evidence="2 7">
    <location>
        <position position="216"/>
    </location>
    <ligand>
        <name>(S)-malate</name>
        <dbReference type="ChEBI" id="CHEBI:15589"/>
        <label>1</label>
    </ligand>
</feature>
<feature type="binding site" evidence="2 7">
    <location>
        <begin position="219"/>
        <end position="225"/>
    </location>
    <ligand>
        <name>(S)-malate</name>
        <dbReference type="ChEBI" id="CHEBI:15589"/>
        <label>2</label>
    </ligand>
</feature>
<feature type="binding site" evidence="2 7">
    <location>
        <position position="252"/>
    </location>
    <ligand>
        <name>[4Fe-4S] cluster</name>
        <dbReference type="ChEBI" id="CHEBI:49883"/>
    </ligand>
</feature>
<feature type="binding site" evidence="2 7">
    <location>
        <position position="346"/>
    </location>
    <ligand>
        <name>[4Fe-4S] cluster</name>
        <dbReference type="ChEBI" id="CHEBI:49883"/>
    </ligand>
</feature>
<feature type="binding site" evidence="2 7">
    <location>
        <position position="421"/>
    </location>
    <ligand>
        <name>(S)-malate</name>
        <dbReference type="ChEBI" id="CHEBI:15589"/>
        <label>1</label>
    </ligand>
</feature>
<feature type="binding site" evidence="2 7">
    <location>
        <begin position="467"/>
        <end position="471"/>
    </location>
    <ligand>
        <name>(S)-malate</name>
        <dbReference type="ChEBI" id="CHEBI:15589"/>
        <label>1</label>
    </ligand>
</feature>
<feature type="binding site" evidence="2 7">
    <location>
        <position position="491"/>
    </location>
    <ligand>
        <name>(S)-malate</name>
        <dbReference type="ChEBI" id="CHEBI:15589"/>
        <label>1</label>
    </ligand>
</feature>
<feature type="strand" evidence="9">
    <location>
        <begin position="43"/>
        <end position="45"/>
    </location>
</feature>
<feature type="strand" evidence="8">
    <location>
        <begin position="47"/>
        <end position="49"/>
    </location>
</feature>
<feature type="helix" evidence="8">
    <location>
        <begin position="53"/>
        <end position="56"/>
    </location>
</feature>
<feature type="strand" evidence="8">
    <location>
        <begin position="57"/>
        <end position="62"/>
    </location>
</feature>
<feature type="strand" evidence="8">
    <location>
        <begin position="65"/>
        <end position="70"/>
    </location>
</feature>
<feature type="helix" evidence="8">
    <location>
        <begin position="73"/>
        <end position="85"/>
    </location>
</feature>
<feature type="turn" evidence="8">
    <location>
        <begin position="86"/>
        <end position="88"/>
    </location>
</feature>
<feature type="helix" evidence="8">
    <location>
        <begin position="92"/>
        <end position="103"/>
    </location>
</feature>
<feature type="helix" evidence="8">
    <location>
        <begin position="109"/>
        <end position="125"/>
    </location>
</feature>
<feature type="strand" evidence="8">
    <location>
        <begin position="128"/>
        <end position="130"/>
    </location>
</feature>
<feature type="strand" evidence="8">
    <location>
        <begin position="132"/>
        <end position="134"/>
    </location>
</feature>
<feature type="strand" evidence="8">
    <location>
        <begin position="138"/>
        <end position="146"/>
    </location>
</feature>
<feature type="helix" evidence="8">
    <location>
        <begin position="155"/>
        <end position="169"/>
    </location>
</feature>
<feature type="strand" evidence="8">
    <location>
        <begin position="176"/>
        <end position="183"/>
    </location>
</feature>
<feature type="strand" evidence="8">
    <location>
        <begin position="185"/>
        <end position="187"/>
    </location>
</feature>
<feature type="strand" evidence="8">
    <location>
        <begin position="189"/>
        <end position="191"/>
    </location>
</feature>
<feature type="strand" evidence="8">
    <location>
        <begin position="195"/>
        <end position="204"/>
    </location>
</feature>
<feature type="strand" evidence="8">
    <location>
        <begin position="206"/>
        <end position="213"/>
    </location>
</feature>
<feature type="helix" evidence="8">
    <location>
        <begin position="215"/>
        <end position="218"/>
    </location>
</feature>
<feature type="strand" evidence="8">
    <location>
        <begin position="221"/>
        <end position="226"/>
    </location>
</feature>
<feature type="helix" evidence="8">
    <location>
        <begin position="228"/>
        <end position="230"/>
    </location>
</feature>
<feature type="helix" evidence="8">
    <location>
        <begin position="233"/>
        <end position="247"/>
    </location>
</feature>
<feature type="turn" evidence="8">
    <location>
        <begin position="248"/>
        <end position="251"/>
    </location>
</feature>
<feature type="strand" evidence="8">
    <location>
        <begin position="253"/>
        <end position="261"/>
    </location>
</feature>
<feature type="helix" evidence="8">
    <location>
        <begin position="266"/>
        <end position="277"/>
    </location>
</feature>
<feature type="turn" evidence="8">
    <location>
        <begin position="278"/>
        <end position="283"/>
    </location>
</feature>
<feature type="helix" evidence="8">
    <location>
        <begin position="298"/>
        <end position="310"/>
    </location>
</feature>
<feature type="turn" evidence="8">
    <location>
        <begin position="314"/>
        <end position="317"/>
    </location>
</feature>
<feature type="strand" evidence="8">
    <location>
        <begin position="318"/>
        <end position="320"/>
    </location>
</feature>
<feature type="strand" evidence="8">
    <location>
        <begin position="322"/>
        <end position="330"/>
    </location>
</feature>
<feature type="strand" evidence="8">
    <location>
        <begin position="338"/>
        <end position="345"/>
    </location>
</feature>
<feature type="strand" evidence="8">
    <location>
        <begin position="351"/>
        <end position="357"/>
    </location>
</feature>
<feature type="strand" evidence="8">
    <location>
        <begin position="360"/>
        <end position="364"/>
    </location>
</feature>
<feature type="helix" evidence="8">
    <location>
        <begin position="370"/>
        <end position="373"/>
    </location>
</feature>
<feature type="strand" evidence="8">
    <location>
        <begin position="387"/>
        <end position="390"/>
    </location>
</feature>
<feature type="helix" evidence="8">
    <location>
        <begin position="395"/>
        <end position="402"/>
    </location>
</feature>
<feature type="strand" evidence="8">
    <location>
        <begin position="410"/>
        <end position="419"/>
    </location>
</feature>
<feature type="helix" evidence="8">
    <location>
        <begin position="422"/>
        <end position="433"/>
    </location>
</feature>
<feature type="helix" evidence="8">
    <location>
        <begin position="440"/>
        <end position="442"/>
    </location>
</feature>
<feature type="strand" evidence="8">
    <location>
        <begin position="443"/>
        <end position="445"/>
    </location>
</feature>
<feature type="helix" evidence="8">
    <location>
        <begin position="469"/>
        <end position="475"/>
    </location>
</feature>
<feature type="helix" evidence="8">
    <location>
        <begin position="476"/>
        <end position="480"/>
    </location>
</feature>
<feature type="turn" evidence="8">
    <location>
        <begin position="481"/>
        <end position="483"/>
    </location>
</feature>
<feature type="strand" evidence="8">
    <location>
        <begin position="486"/>
        <end position="492"/>
    </location>
</feature>
<feature type="helix" evidence="8">
    <location>
        <begin position="496"/>
        <end position="505"/>
    </location>
</feature>
<feature type="strand" evidence="8">
    <location>
        <begin position="508"/>
        <end position="512"/>
    </location>
</feature>
<feature type="helix" evidence="8">
    <location>
        <begin position="517"/>
        <end position="523"/>
    </location>
</feature>
<feature type="strand" evidence="8">
    <location>
        <begin position="525"/>
        <end position="532"/>
    </location>
</feature>
<feature type="helix" evidence="8">
    <location>
        <begin position="534"/>
        <end position="539"/>
    </location>
</feature>
<feature type="strand" evidence="8">
    <location>
        <begin position="540"/>
        <end position="555"/>
    </location>
</feature>
<feature type="strand" evidence="8">
    <location>
        <begin position="557"/>
        <end position="559"/>
    </location>
</feature>
<feature type="turn" evidence="8">
    <location>
        <begin position="562"/>
        <end position="567"/>
    </location>
</feature>
<dbReference type="EC" id="4.2.1.2" evidence="1 2 3"/>
<dbReference type="EMBL" id="FR796425">
    <property type="protein sequence ID" value="CBZ12536.1"/>
    <property type="molecule type" value="Genomic_DNA"/>
</dbReference>
<dbReference type="RefSeq" id="XP_003722278.1">
    <property type="nucleotide sequence ID" value="XM_003722230.1"/>
</dbReference>
<dbReference type="PDB" id="5L2R">
    <property type="method" value="X-ray"/>
    <property type="resolution" value="2.05 A"/>
    <property type="chains" value="A/B=1-568"/>
</dbReference>
<dbReference type="PDB" id="6MSN">
    <property type="method" value="X-ray"/>
    <property type="resolution" value="1.59 A"/>
    <property type="chains" value="A/B=1-568"/>
</dbReference>
<dbReference type="PDB" id="6UNZ">
    <property type="method" value="X-ray"/>
    <property type="resolution" value="3.19 A"/>
    <property type="chains" value="A/B/C/D/E/F/G/H=1-568"/>
</dbReference>
<dbReference type="PDB" id="6UO0">
    <property type="method" value="X-ray"/>
    <property type="resolution" value="1.85 A"/>
    <property type="chains" value="A/B=1-568"/>
</dbReference>
<dbReference type="PDB" id="6UOI">
    <property type="method" value="X-ray"/>
    <property type="resolution" value="1.95 A"/>
    <property type="chains" value="A/B=1-568"/>
</dbReference>
<dbReference type="PDB" id="6UOJ">
    <property type="method" value="X-ray"/>
    <property type="resolution" value="2.35 A"/>
    <property type="chains" value="A/B=1-568"/>
</dbReference>
<dbReference type="PDB" id="6UP9">
    <property type="method" value="X-ray"/>
    <property type="resolution" value="1.95 A"/>
    <property type="chains" value="A/B=1-568"/>
</dbReference>
<dbReference type="PDB" id="6UPM">
    <property type="method" value="X-ray"/>
    <property type="resolution" value="2.03 A"/>
    <property type="chains" value="A/B=1-568"/>
</dbReference>
<dbReference type="PDB" id="6UPO">
    <property type="method" value="X-ray"/>
    <property type="resolution" value="3.11 A"/>
    <property type="chains" value="A/B=1-568"/>
</dbReference>
<dbReference type="PDB" id="6UQ8">
    <property type="method" value="X-ray"/>
    <property type="resolution" value="1.34 A"/>
    <property type="chains" value="A/B=1-568"/>
</dbReference>
<dbReference type="PDB" id="6UQ9">
    <property type="method" value="X-ray"/>
    <property type="resolution" value="2.30 A"/>
    <property type="chains" value="A/B=1-568"/>
</dbReference>
<dbReference type="PDB" id="6UQB">
    <property type="method" value="X-ray"/>
    <property type="resolution" value="1.95 A"/>
    <property type="chains" value="A/B=1-568"/>
</dbReference>
<dbReference type="PDB" id="6UQL">
    <property type="method" value="X-ray"/>
    <property type="resolution" value="2.10 A"/>
    <property type="chains" value="A/B=1-568"/>
</dbReference>
<dbReference type="PDB" id="6UQM">
    <property type="method" value="X-ray"/>
    <property type="resolution" value="2.00 A"/>
    <property type="chains" value="A/B=1-568"/>
</dbReference>
<dbReference type="PDB" id="6UQN">
    <property type="method" value="X-ray"/>
    <property type="resolution" value="3.30 A"/>
    <property type="chains" value="A/B=1-568"/>
</dbReference>
<dbReference type="PDBsum" id="5L2R"/>
<dbReference type="PDBsum" id="6MSN"/>
<dbReference type="PDBsum" id="6UNZ"/>
<dbReference type="PDBsum" id="6UO0"/>
<dbReference type="PDBsum" id="6UOI"/>
<dbReference type="PDBsum" id="6UOJ"/>
<dbReference type="PDBsum" id="6UP9"/>
<dbReference type="PDBsum" id="6UPM"/>
<dbReference type="PDBsum" id="6UPO"/>
<dbReference type="PDBsum" id="6UQ8"/>
<dbReference type="PDBsum" id="6UQ9"/>
<dbReference type="PDBsum" id="6UQB"/>
<dbReference type="PDBsum" id="6UQL"/>
<dbReference type="PDBsum" id="6UQM"/>
<dbReference type="PDBsum" id="6UQN"/>
<dbReference type="SMR" id="E9AE57"/>
<dbReference type="STRING" id="5664.E9AE57"/>
<dbReference type="EnsemblProtists" id="CBZ12536">
    <property type="protein sequence ID" value="CBZ12536"/>
    <property type="gene ID" value="LMJF_29_1960"/>
</dbReference>
<dbReference type="GeneID" id="12981057"/>
<dbReference type="KEGG" id="lma:LMJF_29_1960"/>
<dbReference type="VEuPathDB" id="TriTrypDB:LmjF.29.1960"/>
<dbReference type="VEuPathDB" id="TriTrypDB:LMJFC_290028900"/>
<dbReference type="VEuPathDB" id="TriTrypDB:LMJLV39_290027300"/>
<dbReference type="VEuPathDB" id="TriTrypDB:LMJSD75_290027500"/>
<dbReference type="eggNOG" id="ENOG502QT04">
    <property type="taxonomic scope" value="Eukaryota"/>
</dbReference>
<dbReference type="HOGENOM" id="CLU_026758_0_0_1"/>
<dbReference type="InParanoid" id="E9AE57"/>
<dbReference type="OMA" id="AGVLPMC"/>
<dbReference type="Proteomes" id="UP000000542">
    <property type="component" value="Chromosome 29"/>
</dbReference>
<dbReference type="GO" id="GO:0097014">
    <property type="term" value="C:ciliary plasm"/>
    <property type="evidence" value="ECO:0000266"/>
    <property type="project" value="GeneDB"/>
</dbReference>
<dbReference type="GO" id="GO:0005737">
    <property type="term" value="C:cytoplasm"/>
    <property type="evidence" value="ECO:0000266"/>
    <property type="project" value="GeneDB"/>
</dbReference>
<dbReference type="GO" id="GO:0005829">
    <property type="term" value="C:cytosol"/>
    <property type="evidence" value="ECO:0000314"/>
    <property type="project" value="UniProtKB"/>
</dbReference>
<dbReference type="GO" id="GO:0020015">
    <property type="term" value="C:glycosome"/>
    <property type="evidence" value="ECO:0000266"/>
    <property type="project" value="GeneDB"/>
</dbReference>
<dbReference type="GO" id="GO:0051539">
    <property type="term" value="F:4 iron, 4 sulfur cluster binding"/>
    <property type="evidence" value="ECO:0000314"/>
    <property type="project" value="UniProtKB"/>
</dbReference>
<dbReference type="GO" id="GO:0004333">
    <property type="term" value="F:fumarate hydratase activity"/>
    <property type="evidence" value="ECO:0000314"/>
    <property type="project" value="UniProtKB"/>
</dbReference>
<dbReference type="GO" id="GO:0046872">
    <property type="term" value="F:metal ion binding"/>
    <property type="evidence" value="ECO:0007669"/>
    <property type="project" value="UniProtKB-KW"/>
</dbReference>
<dbReference type="GO" id="GO:0042803">
    <property type="term" value="F:protein homodimerization activity"/>
    <property type="evidence" value="ECO:0000314"/>
    <property type="project" value="UniProtKB"/>
</dbReference>
<dbReference type="GO" id="GO:0006106">
    <property type="term" value="P:fumarate metabolic process"/>
    <property type="evidence" value="ECO:0000314"/>
    <property type="project" value="UniProtKB"/>
</dbReference>
<dbReference type="GO" id="GO:0006108">
    <property type="term" value="P:malate metabolic process"/>
    <property type="evidence" value="ECO:0000314"/>
    <property type="project" value="UniProtKB"/>
</dbReference>
<dbReference type="GO" id="GO:0006099">
    <property type="term" value="P:tricarboxylic acid cycle"/>
    <property type="evidence" value="ECO:0000318"/>
    <property type="project" value="GO_Central"/>
</dbReference>
<dbReference type="FunFam" id="3.20.130.10:FF:000001">
    <property type="entry name" value="Fumarate hydratase class I"/>
    <property type="match status" value="1"/>
</dbReference>
<dbReference type="Gene3D" id="3.20.130.10">
    <property type="entry name" value="Fe-S hydro-lyase, tartrate dehydratase beta-type, catalytic domain"/>
    <property type="match status" value="1"/>
</dbReference>
<dbReference type="InterPro" id="IPR051208">
    <property type="entry name" value="Class-I_Fumarase/Tartrate_DH"/>
</dbReference>
<dbReference type="InterPro" id="IPR004646">
    <property type="entry name" value="Fe-S_hydro-lyase_TtdA-typ_cat"/>
</dbReference>
<dbReference type="InterPro" id="IPR004647">
    <property type="entry name" value="Fe-S_hydro-lyase_TtdB-typ_cat"/>
</dbReference>
<dbReference type="InterPro" id="IPR036660">
    <property type="entry name" value="Fe-S_hydroAse_TtdB_cat_sf"/>
</dbReference>
<dbReference type="InterPro" id="IPR011167">
    <property type="entry name" value="Fe_dep_fumarate_hydratase"/>
</dbReference>
<dbReference type="NCBIfam" id="TIGR00723">
    <property type="entry name" value="ttdB_fumA_fumB"/>
    <property type="match status" value="1"/>
</dbReference>
<dbReference type="PANTHER" id="PTHR30389:SF16">
    <property type="entry name" value="FUMARATE HYDRATASE 2"/>
    <property type="match status" value="1"/>
</dbReference>
<dbReference type="PANTHER" id="PTHR30389">
    <property type="entry name" value="FUMARATE HYDRATASE-RELATED"/>
    <property type="match status" value="1"/>
</dbReference>
<dbReference type="Pfam" id="PF05681">
    <property type="entry name" value="Fumerase"/>
    <property type="match status" value="1"/>
</dbReference>
<dbReference type="Pfam" id="PF05683">
    <property type="entry name" value="Fumerase_C"/>
    <property type="match status" value="1"/>
</dbReference>
<dbReference type="PIRSF" id="PIRSF001394">
    <property type="entry name" value="Fe_dep_fumar_hy"/>
    <property type="match status" value="1"/>
</dbReference>
<dbReference type="SUPFAM" id="SSF117457">
    <property type="entry name" value="FumA C-terminal domain-like"/>
    <property type="match status" value="1"/>
</dbReference>
<protein>
    <recommendedName>
        <fullName>Fumarate hydratase 2</fullName>
        <shortName evidence="4">Fumarase 2</shortName>
        <shortName evidence="4">LmFH-2</shortName>
        <ecNumber evidence="1 2 3">4.2.1.2</ecNumber>
    </recommendedName>
</protein>